<evidence type="ECO:0000255" key="1">
    <source>
        <dbReference type="HAMAP-Rule" id="MF_00758"/>
    </source>
</evidence>
<gene>
    <name type="ordered locus">CGSHiEE_01530</name>
</gene>
<name>Y1530_HAEIE</name>
<feature type="chain" id="PRO_1000046659" description="UPF0301 protein CGSHiEE_01530">
    <location>
        <begin position="1"/>
        <end position="186"/>
    </location>
</feature>
<organism>
    <name type="scientific">Haemophilus influenzae (strain PittEE)</name>
    <dbReference type="NCBI Taxonomy" id="374930"/>
    <lineage>
        <taxon>Bacteria</taxon>
        <taxon>Pseudomonadati</taxon>
        <taxon>Pseudomonadota</taxon>
        <taxon>Gammaproteobacteria</taxon>
        <taxon>Pasteurellales</taxon>
        <taxon>Pasteurellaceae</taxon>
        <taxon>Haemophilus</taxon>
    </lineage>
</organism>
<dbReference type="EMBL" id="CP000671">
    <property type="protein sequence ID" value="ABQ97786.1"/>
    <property type="molecule type" value="Genomic_DNA"/>
</dbReference>
<dbReference type="SMR" id="A5UAI5"/>
<dbReference type="KEGG" id="hip:CGSHiEE_01530"/>
<dbReference type="HOGENOM" id="CLU_057596_1_0_6"/>
<dbReference type="GO" id="GO:0005829">
    <property type="term" value="C:cytosol"/>
    <property type="evidence" value="ECO:0007669"/>
    <property type="project" value="TreeGrafter"/>
</dbReference>
<dbReference type="Gene3D" id="3.40.1740.10">
    <property type="entry name" value="VC0467-like"/>
    <property type="match status" value="1"/>
</dbReference>
<dbReference type="HAMAP" id="MF_00758">
    <property type="entry name" value="UPF0301"/>
    <property type="match status" value="1"/>
</dbReference>
<dbReference type="InterPro" id="IPR003774">
    <property type="entry name" value="AlgH-like"/>
</dbReference>
<dbReference type="NCBIfam" id="NF001266">
    <property type="entry name" value="PRK00228.1-1"/>
    <property type="match status" value="1"/>
</dbReference>
<dbReference type="PANTHER" id="PTHR30327">
    <property type="entry name" value="UNCHARACTERIZED PROTEIN YQGE"/>
    <property type="match status" value="1"/>
</dbReference>
<dbReference type="PANTHER" id="PTHR30327:SF1">
    <property type="entry name" value="UPF0301 PROTEIN YQGE"/>
    <property type="match status" value="1"/>
</dbReference>
<dbReference type="Pfam" id="PF02622">
    <property type="entry name" value="DUF179"/>
    <property type="match status" value="1"/>
</dbReference>
<dbReference type="SUPFAM" id="SSF143456">
    <property type="entry name" value="VC0467-like"/>
    <property type="match status" value="1"/>
</dbReference>
<reference key="1">
    <citation type="journal article" date="2007" name="Genome Biol.">
        <title>Characterization and modeling of the Haemophilus influenzae core and supragenomes based on the complete genomic sequences of Rd and 12 clinical nontypeable strains.</title>
        <authorList>
            <person name="Hogg J.S."/>
            <person name="Hu F.Z."/>
            <person name="Janto B."/>
            <person name="Boissy R."/>
            <person name="Hayes J."/>
            <person name="Keefe R."/>
            <person name="Post J.C."/>
            <person name="Ehrlich G.D."/>
        </authorList>
    </citation>
    <scope>NUCLEOTIDE SEQUENCE [LARGE SCALE GENOMIC DNA]</scope>
    <source>
        <strain>PittEE</strain>
    </source>
</reference>
<proteinExistence type="inferred from homology"/>
<protein>
    <recommendedName>
        <fullName evidence="1">UPF0301 protein CGSHiEE_01530</fullName>
    </recommendedName>
</protein>
<sequence length="186" mass="20863">MMELQGKFLIAMPHLDDYFNRTVVFMCEHNEQGSMGLVINQPTDLSIAELYSKLNFMMKNDRTFGNEMVVAGGPVHTERGFILHKNTLNAFQHTYKVTEELSMTTSADVVETLGSTFAPEKYLVALGCSSWGAGQLEKEISDNAWLVVSSKDQILFDMPYEDRYVAANQLLGIHPYNFALAQVGHS</sequence>
<comment type="similarity">
    <text evidence="1">Belongs to the UPF0301 (AlgH) family.</text>
</comment>
<accession>A5UAI5</accession>